<accession>Q6GEY1</accession>
<feature type="chain" id="PRO_0000293607" description="Aminopyrimidine aminohydrolase">
    <location>
        <begin position="1"/>
        <end position="229"/>
    </location>
</feature>
<feature type="active site" description="Nucleophile" evidence="1">
    <location>
        <position position="137"/>
    </location>
</feature>
<feature type="active site" description="Proton donor" evidence="1">
    <location>
        <position position="208"/>
    </location>
</feature>
<feature type="binding site" evidence="1">
    <location>
        <position position="44"/>
    </location>
    <ligand>
        <name>substrate</name>
    </ligand>
</feature>
<feature type="binding site" evidence="1">
    <location>
        <position position="141"/>
    </location>
    <ligand>
        <name>substrate</name>
    </ligand>
</feature>
<feature type="binding site" evidence="1">
    <location>
        <position position="167"/>
    </location>
    <ligand>
        <name>substrate</name>
    </ligand>
</feature>
<feature type="site" description="Increases nucleophilicity of active site Cys" evidence="1">
    <location>
        <position position="47"/>
    </location>
</feature>
<feature type="mutagenesis site" description="Affects the oligomeric state since the mutant is a monomer that is much more susceptible to serine protease degradation, but has nearly no effect on kinetic parameters; when associated with A-115." evidence="2">
    <original>D</original>
    <variation>A</variation>
    <location>
        <position position="111"/>
    </location>
</feature>
<feature type="mutagenesis site" description="Affects the oligomeric state since the mutant is a monomer that is much more susceptible to serine protease degradation, but has nearly no effect on kinetic parameters; when associated with A-111." evidence="2">
    <original>K</original>
    <variation>A</variation>
    <location>
        <position position="115"/>
    </location>
</feature>
<feature type="helix" evidence="5">
    <location>
        <begin position="3"/>
        <end position="20"/>
    </location>
</feature>
<feature type="helix" evidence="5">
    <location>
        <begin position="22"/>
        <end position="29"/>
    </location>
</feature>
<feature type="helix" evidence="5">
    <location>
        <begin position="34"/>
        <end position="46"/>
    </location>
</feature>
<feature type="helix" evidence="5">
    <location>
        <begin position="48"/>
        <end position="58"/>
    </location>
</feature>
<feature type="helix" evidence="5">
    <location>
        <begin position="65"/>
        <end position="79"/>
    </location>
</feature>
<feature type="helix" evidence="5">
    <location>
        <begin position="84"/>
        <end position="93"/>
    </location>
</feature>
<feature type="helix" evidence="5">
    <location>
        <begin position="97"/>
        <end position="102"/>
    </location>
</feature>
<feature type="helix" evidence="5">
    <location>
        <begin position="108"/>
        <end position="123"/>
    </location>
</feature>
<feature type="helix" evidence="5">
    <location>
        <begin position="128"/>
        <end position="134"/>
    </location>
</feature>
<feature type="helix" evidence="5">
    <location>
        <begin position="136"/>
        <end position="149"/>
    </location>
</feature>
<feature type="helix" evidence="5">
    <location>
        <begin position="160"/>
        <end position="167"/>
    </location>
</feature>
<feature type="turn" evidence="5">
    <location>
        <begin position="168"/>
        <end position="171"/>
    </location>
</feature>
<feature type="helix" evidence="5">
    <location>
        <begin position="172"/>
        <end position="186"/>
    </location>
</feature>
<feature type="helix" evidence="5">
    <location>
        <begin position="191"/>
        <end position="216"/>
    </location>
</feature>
<evidence type="ECO:0000250" key="1">
    <source>
        <dbReference type="UniProtKB" id="P25052"/>
    </source>
</evidence>
<evidence type="ECO:0000269" key="2">
    <source>
    </source>
</evidence>
<evidence type="ECO:0000303" key="3">
    <source>
    </source>
</evidence>
<evidence type="ECO:0000305" key="4"/>
<evidence type="ECO:0007829" key="5">
    <source>
        <dbReference type="PDB" id="4FN6"/>
    </source>
</evidence>
<sequence>MEFSQKLYQAAKPIINDIYEDDFIQKMLLGNIQADALRHYLQADAAYLKEFTNLYALLIPKMNSMNDVKFLVEQIEFMVEGEVLAHDILAQIVGESYEEIIKTKVWPPSGDHYIKHMYFQAHSRENAIYTIAAMAPCPYIYAELAKRSQSDHKLNREKDTAKWFDFYSTEMDDIINVFESLMNKLAESMSDKELEQVKQVFLESCIHERRFFNMAMTLEQWEFGGKVND</sequence>
<proteinExistence type="evidence at protein level"/>
<organism>
    <name type="scientific">Staphylococcus aureus (strain MRSA252)</name>
    <dbReference type="NCBI Taxonomy" id="282458"/>
    <lineage>
        <taxon>Bacteria</taxon>
        <taxon>Bacillati</taxon>
        <taxon>Bacillota</taxon>
        <taxon>Bacilli</taxon>
        <taxon>Bacillales</taxon>
        <taxon>Staphylococcaceae</taxon>
        <taxon>Staphylococcus</taxon>
    </lineage>
</organism>
<protein>
    <recommendedName>
        <fullName evidence="1">Aminopyrimidine aminohydrolase</fullName>
        <ecNumber evidence="2">3.5.99.2</ecNumber>
    </recommendedName>
    <alternativeName>
        <fullName evidence="3">Thiaminase II</fullName>
    </alternativeName>
</protein>
<reference key="1">
    <citation type="journal article" date="2004" name="Proc. Natl. Acad. Sci. U.S.A.">
        <title>Complete genomes of two clinical Staphylococcus aureus strains: evidence for the rapid evolution of virulence and drug resistance.</title>
        <authorList>
            <person name="Holden M.T.G."/>
            <person name="Feil E.J."/>
            <person name="Lindsay J.A."/>
            <person name="Peacock S.J."/>
            <person name="Day N.P.J."/>
            <person name="Enright M.C."/>
            <person name="Foster T.J."/>
            <person name="Moore C.E."/>
            <person name="Hurst L."/>
            <person name="Atkin R."/>
            <person name="Barron A."/>
            <person name="Bason N."/>
            <person name="Bentley S.D."/>
            <person name="Chillingworth C."/>
            <person name="Chillingworth T."/>
            <person name="Churcher C."/>
            <person name="Clark L."/>
            <person name="Corton C."/>
            <person name="Cronin A."/>
            <person name="Doggett J."/>
            <person name="Dowd L."/>
            <person name="Feltwell T."/>
            <person name="Hance Z."/>
            <person name="Harris B."/>
            <person name="Hauser H."/>
            <person name="Holroyd S."/>
            <person name="Jagels K."/>
            <person name="James K.D."/>
            <person name="Lennard N."/>
            <person name="Line A."/>
            <person name="Mayes R."/>
            <person name="Moule S."/>
            <person name="Mungall K."/>
            <person name="Ormond D."/>
            <person name="Quail M.A."/>
            <person name="Rabbinowitsch E."/>
            <person name="Rutherford K.M."/>
            <person name="Sanders M."/>
            <person name="Sharp S."/>
            <person name="Simmonds M."/>
            <person name="Stevens K."/>
            <person name="Whitehead S."/>
            <person name="Barrell B.G."/>
            <person name="Spratt B.G."/>
            <person name="Parkhill J."/>
        </authorList>
    </citation>
    <scope>NUCLEOTIDE SEQUENCE [LARGE SCALE GENOMIC DNA]</scope>
    <source>
        <strain>MRSA252</strain>
    </source>
</reference>
<reference key="2">
    <citation type="journal article" date="2011" name="Acta Crystallogr. F">
        <title>Purification, crystallization and preliminary X-ray diffraction analysis of the thiaminase type II from Staphylococcus aureus.</title>
        <authorList>
            <person name="Begum A."/>
            <person name="Drebes J."/>
            <person name="Perbandt M."/>
            <person name="Wrenger C."/>
            <person name="Betzel C."/>
        </authorList>
    </citation>
    <scope>CRYSTALLIZATION</scope>
    <source>
        <strain>ATCC 25923 / DSM 1104 / Seattle 1945 / FO 14462 / JCM 2413</strain>
    </source>
</reference>
<reference key="3">
    <citation type="journal article" date="2013" name="Acta Crystallogr. D">
        <title>Staphylococcus aureus thiaminase II: oligomerization warrants proteolytic protection against serine proteases.</title>
        <authorList>
            <person name="Begum A."/>
            <person name="Drebes J."/>
            <person name="Kikhney A."/>
            <person name="Mueller I.B."/>
            <person name="Perbandt M."/>
            <person name="Svergun D."/>
            <person name="Wrenger C."/>
            <person name="Betzel C."/>
        </authorList>
    </citation>
    <scope>X-RAY CRYSTALLOGRAPHY (2.69 ANGSTROMS)</scope>
    <scope>FUNCTION</scope>
    <scope>CATALYTIC ACTIVITY</scope>
    <scope>BIOPHYSICOCHEMICAL PROPERTIES</scope>
    <scope>SUBUNIT</scope>
    <scope>MUTAGENESIS OF ASP-111 AND LYS-115</scope>
    <source>
        <strain>ATCC 25923 / DSM 1104 / Seattle 1945 / FO 14462 / JCM 2413</strain>
    </source>
</reference>
<name>TENA_STAAR</name>
<gene>
    <name evidence="3" type="primary">tenA</name>
    <name type="ordered locus">SAR2183</name>
</gene>
<dbReference type="EC" id="3.5.99.2" evidence="2"/>
<dbReference type="EMBL" id="BX571856">
    <property type="protein sequence ID" value="CAG41163.1"/>
    <property type="molecule type" value="Genomic_DNA"/>
</dbReference>
<dbReference type="RefSeq" id="WP_000396068.1">
    <property type="nucleotide sequence ID" value="NC_002952.2"/>
</dbReference>
<dbReference type="PDB" id="4FN6">
    <property type="method" value="X-ray"/>
    <property type="resolution" value="2.69 A"/>
    <property type="chains" value="A/B/C/D=1-229"/>
</dbReference>
<dbReference type="PDBsum" id="4FN6"/>
<dbReference type="SASBDB" id="Q6GEY1"/>
<dbReference type="SMR" id="Q6GEY1"/>
<dbReference type="KEGG" id="sar:SAR2183"/>
<dbReference type="HOGENOM" id="CLU_077537_3_1_9"/>
<dbReference type="UniPathway" id="UPA00060"/>
<dbReference type="EvolutionaryTrace" id="Q6GEY1"/>
<dbReference type="Proteomes" id="UP000000596">
    <property type="component" value="Chromosome"/>
</dbReference>
<dbReference type="GO" id="GO:0005829">
    <property type="term" value="C:cytosol"/>
    <property type="evidence" value="ECO:0007669"/>
    <property type="project" value="TreeGrafter"/>
</dbReference>
<dbReference type="GO" id="GO:0050334">
    <property type="term" value="F:thiaminase activity"/>
    <property type="evidence" value="ECO:0007669"/>
    <property type="project" value="UniProtKB-EC"/>
</dbReference>
<dbReference type="GO" id="GO:0009228">
    <property type="term" value="P:thiamine biosynthetic process"/>
    <property type="evidence" value="ECO:0007669"/>
    <property type="project" value="UniProtKB-KW"/>
</dbReference>
<dbReference type="GO" id="GO:0009229">
    <property type="term" value="P:thiamine diphosphate biosynthetic process"/>
    <property type="evidence" value="ECO:0007669"/>
    <property type="project" value="UniProtKB-UniPathway"/>
</dbReference>
<dbReference type="CDD" id="cd19360">
    <property type="entry name" value="TenA_C_SaTenA-like"/>
    <property type="match status" value="1"/>
</dbReference>
<dbReference type="FunFam" id="1.20.910.10:FF:000010">
    <property type="entry name" value="Aminopyrimidine aminohydrolase"/>
    <property type="match status" value="1"/>
</dbReference>
<dbReference type="Gene3D" id="1.20.910.10">
    <property type="entry name" value="Heme oxygenase-like"/>
    <property type="match status" value="1"/>
</dbReference>
<dbReference type="InterPro" id="IPR016084">
    <property type="entry name" value="Haem_Oase-like_multi-hlx"/>
</dbReference>
<dbReference type="InterPro" id="IPR004305">
    <property type="entry name" value="Thiaminase-2/PQQC"/>
</dbReference>
<dbReference type="InterPro" id="IPR027574">
    <property type="entry name" value="Thiaminase_II"/>
</dbReference>
<dbReference type="InterPro" id="IPR050967">
    <property type="entry name" value="Thiamine_Salvage_TenA"/>
</dbReference>
<dbReference type="NCBIfam" id="TIGR04306">
    <property type="entry name" value="salvage_TenA"/>
    <property type="match status" value="1"/>
</dbReference>
<dbReference type="PANTHER" id="PTHR43198">
    <property type="entry name" value="BIFUNCTIONAL TH2 PROTEIN"/>
    <property type="match status" value="1"/>
</dbReference>
<dbReference type="PANTHER" id="PTHR43198:SF2">
    <property type="entry name" value="SI:CH1073-67J19.1-RELATED"/>
    <property type="match status" value="1"/>
</dbReference>
<dbReference type="Pfam" id="PF03070">
    <property type="entry name" value="TENA_THI-4"/>
    <property type="match status" value="1"/>
</dbReference>
<dbReference type="SUPFAM" id="SSF48613">
    <property type="entry name" value="Heme oxygenase-like"/>
    <property type="match status" value="1"/>
</dbReference>
<comment type="function">
    <text evidence="1 2 4">Catalyzes an amino-pyrimidine hydrolysis reaction at the C5' of the pyrimidine moiety of thiamine compounds, a reaction that is part of a thiamine salvage pathway. Thus, catalyzes the conversion of 4-amino-5-aminomethyl-2-methylpyrimidine to 4-amino-5-hydroxymethyl-2-methylpyrimidine (HMP) (By similarity). Is also able to catalyze the hydrolytic cleavage of thiamine; however, this thiaminase activity may not be physiologically relevant. Therefore, is probably involved in the regeneration of the thiamine pyrimidine from thiamine degraded products present in the environment, rather than in thiamine degradation.</text>
</comment>
<comment type="catalytic activity">
    <reaction evidence="1">
        <text>4-amino-5-aminomethyl-2-methylpyrimidine + H2O = 4-amino-5-hydroxymethyl-2-methylpyrimidine + NH4(+)</text>
        <dbReference type="Rhea" id="RHEA:31799"/>
        <dbReference type="ChEBI" id="CHEBI:15377"/>
        <dbReference type="ChEBI" id="CHEBI:16892"/>
        <dbReference type="ChEBI" id="CHEBI:28938"/>
        <dbReference type="ChEBI" id="CHEBI:63416"/>
        <dbReference type="EC" id="3.5.99.2"/>
    </reaction>
</comment>
<comment type="catalytic activity">
    <reaction evidence="2">
        <text>thiamine + H2O = 5-(2-hydroxyethyl)-4-methylthiazole + 4-amino-5-hydroxymethyl-2-methylpyrimidine + H(+)</text>
        <dbReference type="Rhea" id="RHEA:17509"/>
        <dbReference type="ChEBI" id="CHEBI:15377"/>
        <dbReference type="ChEBI" id="CHEBI:15378"/>
        <dbReference type="ChEBI" id="CHEBI:16892"/>
        <dbReference type="ChEBI" id="CHEBI:17957"/>
        <dbReference type="ChEBI" id="CHEBI:18385"/>
        <dbReference type="EC" id="3.5.99.2"/>
    </reaction>
</comment>
<comment type="biophysicochemical properties">
    <kinetics>
        <KM evidence="2">1.4 mM for thiamine</KM>
        <text evidence="2">kcat is 4.07 msec(-1) for the hydrolysis of thiamine.</text>
    </kinetics>
</comment>
<comment type="pathway">
    <text evidence="1">Cofactor biosynthesis; thiamine diphosphate biosynthesis.</text>
</comment>
<comment type="subunit">
    <text evidence="2">Homotetramer.</text>
</comment>
<comment type="similarity">
    <text evidence="4">Belongs to the TenA family.</text>
</comment>
<keyword id="KW-0002">3D-structure</keyword>
<keyword id="KW-0378">Hydrolase</keyword>
<keyword id="KW-0784">Thiamine biosynthesis</keyword>